<accession>Q9NCL8</accession>
<accession>Q54GK7</accession>
<sequence>MLIREFRVVLPLTVEEYRVGQLYSVAKTSSQETSNGEGVEVLVNEPYKEPEHEGQYTHKIYHLGSRLPGWIRALIPSSALKLEEKAWNAYPYCKTVLKSPFLGEKFTFIIESRHAQDNCKTENIHNLSEKELKERTVEVIDITKPIKDPKNYKETEDPTKIRSEKANRGPLEEEKWRESTEMPIMTCYKLVTVEFKYFGFQTKVENFMMGIEFDLFTKFHRQVYCWLDEWFGMSMDDVRAFELKTKEDLKKKLEEKDENKAAEK</sequence>
<organism>
    <name type="scientific">Dictyostelium discoideum</name>
    <name type="common">Social amoeba</name>
    <dbReference type="NCBI Taxonomy" id="44689"/>
    <lineage>
        <taxon>Eukaryota</taxon>
        <taxon>Amoebozoa</taxon>
        <taxon>Evosea</taxon>
        <taxon>Eumycetozoa</taxon>
        <taxon>Dictyostelia</taxon>
        <taxon>Dictyosteliales</taxon>
        <taxon>Dictyosteliaceae</taxon>
        <taxon>Dictyostelium</taxon>
    </lineage>
</organism>
<proteinExistence type="evidence at protein level"/>
<feature type="chain" id="PRO_0000328406" description="Phosphatidylinositol transfer protein 1">
    <location>
        <begin position="1"/>
        <end position="264"/>
    </location>
</feature>
<feature type="region of interest" description="Disordered" evidence="2">
    <location>
        <begin position="151"/>
        <end position="174"/>
    </location>
</feature>
<feature type="coiled-coil region" evidence="1">
    <location>
        <begin position="238"/>
        <end position="264"/>
    </location>
</feature>
<protein>
    <recommendedName>
        <fullName>Phosphatidylinositol transfer protein 1</fullName>
        <shortName>PtdIns transfer protein 1</shortName>
    </recommendedName>
    <alternativeName>
        <fullName>DdPITP1</fullName>
    </alternativeName>
</protein>
<dbReference type="EMBL" id="AF205061">
    <property type="protein sequence ID" value="AAF74409.1"/>
    <property type="molecule type" value="mRNA"/>
</dbReference>
<dbReference type="EMBL" id="AAFI02000152">
    <property type="protein sequence ID" value="EAL62395.1"/>
    <property type="molecule type" value="Genomic_DNA"/>
</dbReference>
<dbReference type="RefSeq" id="XP_635910.1">
    <property type="nucleotide sequence ID" value="XM_630818.1"/>
</dbReference>
<dbReference type="SMR" id="Q9NCL8"/>
<dbReference type="FunCoup" id="Q9NCL8">
    <property type="interactions" value="242"/>
</dbReference>
<dbReference type="PaxDb" id="44689-DDB0201633"/>
<dbReference type="EnsemblProtists" id="EAL62395">
    <property type="protein sequence ID" value="EAL62395"/>
    <property type="gene ID" value="DDB_G0290069"/>
</dbReference>
<dbReference type="GeneID" id="8627476"/>
<dbReference type="KEGG" id="ddi:DDB_G0290069"/>
<dbReference type="dictyBase" id="DDB_G0290069">
    <property type="gene designation" value="pitA"/>
</dbReference>
<dbReference type="VEuPathDB" id="AmoebaDB:DDB_G0290069"/>
<dbReference type="eggNOG" id="KOG3668">
    <property type="taxonomic scope" value="Eukaryota"/>
</dbReference>
<dbReference type="HOGENOM" id="CLU_046509_0_0_1"/>
<dbReference type="InParanoid" id="Q9NCL8"/>
<dbReference type="OMA" id="NELKPDC"/>
<dbReference type="PhylomeDB" id="Q9NCL8"/>
<dbReference type="Reactome" id="R-DDI-1483196">
    <property type="pathway name" value="PI and PC transport between ER and Golgi membranes"/>
</dbReference>
<dbReference type="PRO" id="PR:Q9NCL8"/>
<dbReference type="Proteomes" id="UP000002195">
    <property type="component" value="Chromosome 5"/>
</dbReference>
<dbReference type="GO" id="GO:0071944">
    <property type="term" value="C:cell periphery"/>
    <property type="evidence" value="ECO:0000314"/>
    <property type="project" value="dictyBase"/>
</dbReference>
<dbReference type="GO" id="GO:0005737">
    <property type="term" value="C:cytoplasm"/>
    <property type="evidence" value="ECO:0000318"/>
    <property type="project" value="GO_Central"/>
</dbReference>
<dbReference type="GO" id="GO:0005794">
    <property type="term" value="C:Golgi apparatus"/>
    <property type="evidence" value="ECO:0000314"/>
    <property type="project" value="dictyBase"/>
</dbReference>
<dbReference type="GO" id="GO:0031210">
    <property type="term" value="F:phosphatidylcholine binding"/>
    <property type="evidence" value="ECO:0000318"/>
    <property type="project" value="GO_Central"/>
</dbReference>
<dbReference type="GO" id="GO:0008525">
    <property type="term" value="F:phosphatidylcholine transporter activity"/>
    <property type="evidence" value="ECO:0000318"/>
    <property type="project" value="GO_Central"/>
</dbReference>
<dbReference type="GO" id="GO:0035091">
    <property type="term" value="F:phosphatidylinositol binding"/>
    <property type="evidence" value="ECO:0000318"/>
    <property type="project" value="GO_Central"/>
</dbReference>
<dbReference type="GO" id="GO:0008526">
    <property type="term" value="F:phosphatidylinositol transfer activity"/>
    <property type="evidence" value="ECO:0000314"/>
    <property type="project" value="dictyBase"/>
</dbReference>
<dbReference type="CDD" id="cd08888">
    <property type="entry name" value="SRPBCC_PITPNA-B_like"/>
    <property type="match status" value="1"/>
</dbReference>
<dbReference type="FunFam" id="3.30.530.20:FF:000028">
    <property type="entry name" value="Phosphatidylinositol transfer protein 5"/>
    <property type="match status" value="1"/>
</dbReference>
<dbReference type="Gene3D" id="3.30.530.20">
    <property type="match status" value="1"/>
</dbReference>
<dbReference type="InterPro" id="IPR001666">
    <property type="entry name" value="PI_transfer"/>
</dbReference>
<dbReference type="InterPro" id="IPR055261">
    <property type="entry name" value="PI_transfer_N"/>
</dbReference>
<dbReference type="InterPro" id="IPR023393">
    <property type="entry name" value="START-like_dom_sf"/>
</dbReference>
<dbReference type="PANTHER" id="PTHR10658">
    <property type="entry name" value="PHOSPHATIDYLINOSITOL TRANSFER PROTEIN"/>
    <property type="match status" value="1"/>
</dbReference>
<dbReference type="PANTHER" id="PTHR10658:SF11">
    <property type="entry name" value="VIBRATOR, ISOFORM B"/>
    <property type="match status" value="1"/>
</dbReference>
<dbReference type="Pfam" id="PF02121">
    <property type="entry name" value="IP_trans"/>
    <property type="match status" value="1"/>
</dbReference>
<dbReference type="PRINTS" id="PR00391">
    <property type="entry name" value="PITRANSFER"/>
</dbReference>
<dbReference type="SUPFAM" id="SSF55961">
    <property type="entry name" value="Bet v1-like"/>
    <property type="match status" value="1"/>
</dbReference>
<comment type="function">
    <text>Catalyzes the transfer of PtdIns and phosphatidylcholine between membranes.</text>
</comment>
<comment type="subcellular location">
    <subcellularLocation>
        <location evidence="3">Cytoplasm</location>
    </subcellularLocation>
    <subcellularLocation>
        <location evidence="3">Golgi apparatus</location>
    </subcellularLocation>
</comment>
<comment type="developmental stage">
    <text evidence="3">Expressed throughout growth and development.</text>
</comment>
<comment type="PTM">
    <text evidence="4">Phosphorylated in response to activation of rasG.</text>
</comment>
<comment type="similarity">
    <text evidence="5">Belongs to the PtdIns transfer protein family. PI transfer class I subfamily.</text>
</comment>
<keyword id="KW-0175">Coiled coil</keyword>
<keyword id="KW-0963">Cytoplasm</keyword>
<keyword id="KW-0333">Golgi apparatus</keyword>
<keyword id="KW-0446">Lipid-binding</keyword>
<keyword id="KW-0597">Phosphoprotein</keyword>
<keyword id="KW-1185">Reference proteome</keyword>
<keyword id="KW-0813">Transport</keyword>
<name>PITP1_DICDI</name>
<evidence type="ECO:0000255" key="1"/>
<evidence type="ECO:0000256" key="2">
    <source>
        <dbReference type="SAM" id="MobiDB-lite"/>
    </source>
</evidence>
<evidence type="ECO:0000269" key="3">
    <source>
    </source>
</evidence>
<evidence type="ECO:0000269" key="4">
    <source>
    </source>
</evidence>
<evidence type="ECO:0000305" key="5"/>
<reference key="1">
    <citation type="journal article" date="2000" name="Biochem. J.">
        <title>Purification and cloning of phosphatidylinositol transfer proteins from Dictyostelium discoideum: homologues of both mammalian PITPs and Saccharomyces cerevisiae sec14p are found in the same cell.</title>
        <authorList>
            <person name="Swigart P."/>
            <person name="Insall R."/>
            <person name="Wilkins A."/>
            <person name="Cockcroft S."/>
        </authorList>
    </citation>
    <scope>NUCLEOTIDE SEQUENCE [MRNA]</scope>
    <scope>ACTIVITY AS PHOSPHATIDYLINOSITOL TRANSFER PROTEIN</scope>
    <scope>SUBCELLULAR LOCATION</scope>
    <scope>DEVELOPMENTAL STAGE</scope>
    <source>
        <strain>AX3</strain>
    </source>
</reference>
<reference key="2">
    <citation type="journal article" date="2005" name="Nature">
        <title>The genome of the social amoeba Dictyostelium discoideum.</title>
        <authorList>
            <person name="Eichinger L."/>
            <person name="Pachebat J.A."/>
            <person name="Gloeckner G."/>
            <person name="Rajandream M.A."/>
            <person name="Sucgang R."/>
            <person name="Berriman M."/>
            <person name="Song J."/>
            <person name="Olsen R."/>
            <person name="Szafranski K."/>
            <person name="Xu Q."/>
            <person name="Tunggal B."/>
            <person name="Kummerfeld S."/>
            <person name="Madera M."/>
            <person name="Konfortov B.A."/>
            <person name="Rivero F."/>
            <person name="Bankier A.T."/>
            <person name="Lehmann R."/>
            <person name="Hamlin N."/>
            <person name="Davies R."/>
            <person name="Gaudet P."/>
            <person name="Fey P."/>
            <person name="Pilcher K."/>
            <person name="Chen G."/>
            <person name="Saunders D."/>
            <person name="Sodergren E.J."/>
            <person name="Davis P."/>
            <person name="Kerhornou A."/>
            <person name="Nie X."/>
            <person name="Hall N."/>
            <person name="Anjard C."/>
            <person name="Hemphill L."/>
            <person name="Bason N."/>
            <person name="Farbrother P."/>
            <person name="Desany B."/>
            <person name="Just E."/>
            <person name="Morio T."/>
            <person name="Rost R."/>
            <person name="Churcher C.M."/>
            <person name="Cooper J."/>
            <person name="Haydock S."/>
            <person name="van Driessche N."/>
            <person name="Cronin A."/>
            <person name="Goodhead I."/>
            <person name="Muzny D.M."/>
            <person name="Mourier T."/>
            <person name="Pain A."/>
            <person name="Lu M."/>
            <person name="Harper D."/>
            <person name="Lindsay R."/>
            <person name="Hauser H."/>
            <person name="James K.D."/>
            <person name="Quiles M."/>
            <person name="Madan Babu M."/>
            <person name="Saito T."/>
            <person name="Buchrieser C."/>
            <person name="Wardroper A."/>
            <person name="Felder M."/>
            <person name="Thangavelu M."/>
            <person name="Johnson D."/>
            <person name="Knights A."/>
            <person name="Loulseged H."/>
            <person name="Mungall K.L."/>
            <person name="Oliver K."/>
            <person name="Price C."/>
            <person name="Quail M.A."/>
            <person name="Urushihara H."/>
            <person name="Hernandez J."/>
            <person name="Rabbinowitsch E."/>
            <person name="Steffen D."/>
            <person name="Sanders M."/>
            <person name="Ma J."/>
            <person name="Kohara Y."/>
            <person name="Sharp S."/>
            <person name="Simmonds M.N."/>
            <person name="Spiegler S."/>
            <person name="Tivey A."/>
            <person name="Sugano S."/>
            <person name="White B."/>
            <person name="Walker D."/>
            <person name="Woodward J.R."/>
            <person name="Winckler T."/>
            <person name="Tanaka Y."/>
            <person name="Shaulsky G."/>
            <person name="Schleicher M."/>
            <person name="Weinstock G.M."/>
            <person name="Rosenthal A."/>
            <person name="Cox E.C."/>
            <person name="Chisholm R.L."/>
            <person name="Gibbs R.A."/>
            <person name="Loomis W.F."/>
            <person name="Platzer M."/>
            <person name="Kay R.R."/>
            <person name="Williams J.G."/>
            <person name="Dear P.H."/>
            <person name="Noegel A.A."/>
            <person name="Barrell B.G."/>
            <person name="Kuspa A."/>
        </authorList>
    </citation>
    <scope>NUCLEOTIDE SEQUENCE [LARGE SCALE GENOMIC DNA]</scope>
    <source>
        <strain>AX4</strain>
    </source>
</reference>
<reference key="3">
    <citation type="journal article" date="2004" name="Proteomics">
        <title>The identification of Dictyostelium phosphoproteins altered in response to the activation of RasG.</title>
        <authorList>
            <person name="Secko D.M."/>
            <person name="Insall R.H."/>
            <person name="Spiegelman G.B."/>
            <person name="Weeks G."/>
        </authorList>
    </citation>
    <scope>PHOSPHORYLATION</scope>
    <source>
        <strain>AX2</strain>
    </source>
</reference>
<gene>
    <name type="primary">pitA</name>
    <name type="ORF">DDB_G0290069</name>
</gene>